<gene>
    <name evidence="1" type="primary">addB</name>
    <name type="ordered locus">CLD_0317</name>
</gene>
<sequence length="1150" mass="133493">MSLRFIYGRAGSGKSQYCLNSIKNRIEEDIDRPLILLVPEQFSFQAEKNLIEVLDEKTGFKTQVLSFKRMAYRVFNEVGGITAKHMNESGKSMLLYNIIEDNKNNLKVFKKAAKRQGFITTISDIITEFKRYNITPEIILNNLENIEGDNLKYKMEDLALIFSQFETRLHKNYIDNEDDLTILVEKLNKSKQFDNAEIWIDEFSSFSPQEYSVLEKLLLKSYRINITLCTDYLNQGRFVDTTDVFSPIKNTENKLLQIIEDNNIKLDKPIALKCDPCARFKNSAELQHLEKNMFSFPYKEYKNETKDICMLKTLNQFTEIENTAKDIIKLCIDKGCRFKDIAVITGDLEGYENIISSVFLQYNIPFFIDKKREINNNPIIVLILSALEVLSKNWTYESVFRYLKTGLLDINNEEMDILENYVLANGIKGYQWTNDKPWEHKSFSNYELEDQALKELLAKINDIRYKAMEPIVTLNKNFKSIDKAKEFCEVLYEFLCNINLPDKIQNMIEDFKVEGEIEKASEYNQIWNIVMEVLDQIVEVIGEEKISLKEFFKILQTGFSEYEIGLIPPTLDQVMVGSITRLRSHNINTLYIVGVNDGIFPSPLKEEGILSDDDREFLGDKGLEIAKDTKSIAFEEQFLVYSTLTTPSKYLRLSYPIADGEGKTLRPSIIISRIKKIFANICEENDIVKLNGEEEELKNISSAKPTFNYLISNLRKDVEGVKIDNIWGDTYKWYLENEFWIEKLNRLIKGFDYTNQSKYIETKKIRNLYGKPLKISVSRVEKFSQCPFAYFVQYGLKAKDRKIFNLSYPDLGIFMHSILEKFSHELEKKGLEWGTMDLNWAEEEIDKLINEELDNKSLDILNSSKRYEYVTKSVKKILKRSIWLIGEHIKRGNFKPSYYELSFDIDGDYPPIAMELHSGEVINLIGRVDRVDLLQKDGATYLKIIDYKSGIKEFKLSDVYYGLQLQLLIYLDAILTELAERSGINGEPGALLYLKLDDPIVKNTVDMSDEEIEKSIIKNLKMKGLILNDPNVIRDMDNIISGISDIIPVMVKKDGGVSEGRSSVATKEEFETLRKYVRYTIIEICEEMLEGNIEIKPYKKKDGSSCDYCIYSSVCKFDTNIRGNKYNILIDKKDEEVWDAIKKKLEYKNI</sequence>
<feature type="chain" id="PRO_0000379175" description="ATP-dependent helicase/deoxyribonuclease subunit B">
    <location>
        <begin position="1"/>
        <end position="1150"/>
    </location>
</feature>
<feature type="binding site" evidence="1">
    <location>
        <begin position="8"/>
        <end position="15"/>
    </location>
    <ligand>
        <name>ATP</name>
        <dbReference type="ChEBI" id="CHEBI:30616"/>
    </ligand>
</feature>
<feature type="binding site" evidence="1">
    <location>
        <position position="786"/>
    </location>
    <ligand>
        <name>[4Fe-4S] cluster</name>
        <dbReference type="ChEBI" id="CHEBI:49883"/>
    </ligand>
</feature>
<feature type="binding site" evidence="1">
    <location>
        <position position="1106"/>
    </location>
    <ligand>
        <name>[4Fe-4S] cluster</name>
        <dbReference type="ChEBI" id="CHEBI:49883"/>
    </ligand>
</feature>
<feature type="binding site" evidence="1">
    <location>
        <position position="1109"/>
    </location>
    <ligand>
        <name>[4Fe-4S] cluster</name>
        <dbReference type="ChEBI" id="CHEBI:49883"/>
    </ligand>
</feature>
<feature type="binding site" evidence="1">
    <location>
        <position position="1115"/>
    </location>
    <ligand>
        <name>[4Fe-4S] cluster</name>
        <dbReference type="ChEBI" id="CHEBI:49883"/>
    </ligand>
</feature>
<accession>B1IEL7</accession>
<comment type="function">
    <text evidence="1">The heterodimer acts as both an ATP-dependent DNA helicase and an ATP-dependent, dual-direction single-stranded exonuclease. Recognizes the chi site generating a DNA molecule suitable for the initiation of homologous recombination. The AddB subunit has 5' -&gt; 3' nuclease activity but not helicase activity.</text>
</comment>
<comment type="cofactor">
    <cofactor evidence="1">
        <name>Mg(2+)</name>
        <dbReference type="ChEBI" id="CHEBI:18420"/>
    </cofactor>
</comment>
<comment type="cofactor">
    <cofactor evidence="1">
        <name>[4Fe-4S] cluster</name>
        <dbReference type="ChEBI" id="CHEBI:49883"/>
    </cofactor>
    <text evidence="1">Binds 1 [4Fe-4S] cluster.</text>
</comment>
<comment type="subunit">
    <text evidence="1">Heterodimer of AddA and AddB.</text>
</comment>
<comment type="miscellaneous">
    <text evidence="1">Despite having conserved helicase domains, this subunit does not have helicase activity.</text>
</comment>
<comment type="similarity">
    <text evidence="1">Belongs to the helicase family. AddB/RexB type 1 subfamily.</text>
</comment>
<reference key="1">
    <citation type="journal article" date="2007" name="PLoS ONE">
        <title>Analysis of the neurotoxin complex genes in Clostridium botulinum A1-A4 and B1 strains: BoNT/A3, /Ba4 and /B1 clusters are located within plasmids.</title>
        <authorList>
            <person name="Smith T.J."/>
            <person name="Hill K.K."/>
            <person name="Foley B.T."/>
            <person name="Detter J.C."/>
            <person name="Munk A.C."/>
            <person name="Bruce D.C."/>
            <person name="Doggett N.A."/>
            <person name="Smith L.A."/>
            <person name="Marks J.D."/>
            <person name="Xie G."/>
            <person name="Brettin T.S."/>
        </authorList>
    </citation>
    <scope>NUCLEOTIDE SEQUENCE [LARGE SCALE GENOMIC DNA]</scope>
    <source>
        <strain>Okra / Type B1</strain>
    </source>
</reference>
<protein>
    <recommendedName>
        <fullName evidence="1">ATP-dependent helicase/deoxyribonuclease subunit B</fullName>
        <ecNumber evidence="1">3.1.-.-</ecNumber>
    </recommendedName>
    <alternativeName>
        <fullName evidence="1">ATP-dependent helicase/nuclease subunit AddB</fullName>
    </alternativeName>
</protein>
<proteinExistence type="inferred from homology"/>
<keyword id="KW-0004">4Fe-4S</keyword>
<keyword id="KW-0067">ATP-binding</keyword>
<keyword id="KW-0227">DNA damage</keyword>
<keyword id="KW-0234">DNA repair</keyword>
<keyword id="KW-0238">DNA-binding</keyword>
<keyword id="KW-0269">Exonuclease</keyword>
<keyword id="KW-0347">Helicase</keyword>
<keyword id="KW-0378">Hydrolase</keyword>
<keyword id="KW-0408">Iron</keyword>
<keyword id="KW-0411">Iron-sulfur</keyword>
<keyword id="KW-0479">Metal-binding</keyword>
<keyword id="KW-0540">Nuclease</keyword>
<keyword id="KW-0547">Nucleotide-binding</keyword>
<dbReference type="EC" id="3.1.-.-" evidence="1"/>
<dbReference type="EMBL" id="CP000939">
    <property type="protein sequence ID" value="ACA44815.1"/>
    <property type="molecule type" value="Genomic_DNA"/>
</dbReference>
<dbReference type="RefSeq" id="WP_003399595.1">
    <property type="nucleotide sequence ID" value="NC_010516.1"/>
</dbReference>
<dbReference type="SMR" id="B1IEL7"/>
<dbReference type="KEGG" id="cbb:CLD_0317"/>
<dbReference type="HOGENOM" id="CLU_007838_0_0_9"/>
<dbReference type="Proteomes" id="UP000008541">
    <property type="component" value="Chromosome"/>
</dbReference>
<dbReference type="GO" id="GO:0051539">
    <property type="term" value="F:4 iron, 4 sulfur cluster binding"/>
    <property type="evidence" value="ECO:0007669"/>
    <property type="project" value="UniProtKB-KW"/>
</dbReference>
<dbReference type="GO" id="GO:0008409">
    <property type="term" value="F:5'-3' exonuclease activity"/>
    <property type="evidence" value="ECO:0007669"/>
    <property type="project" value="UniProtKB-UniRule"/>
</dbReference>
<dbReference type="GO" id="GO:0005524">
    <property type="term" value="F:ATP binding"/>
    <property type="evidence" value="ECO:0007669"/>
    <property type="project" value="UniProtKB-UniRule"/>
</dbReference>
<dbReference type="GO" id="GO:0003690">
    <property type="term" value="F:double-stranded DNA binding"/>
    <property type="evidence" value="ECO:0007669"/>
    <property type="project" value="UniProtKB-UniRule"/>
</dbReference>
<dbReference type="GO" id="GO:0004386">
    <property type="term" value="F:helicase activity"/>
    <property type="evidence" value="ECO:0007669"/>
    <property type="project" value="UniProtKB-KW"/>
</dbReference>
<dbReference type="GO" id="GO:0046872">
    <property type="term" value="F:metal ion binding"/>
    <property type="evidence" value="ECO:0007669"/>
    <property type="project" value="UniProtKB-KW"/>
</dbReference>
<dbReference type="GO" id="GO:0000724">
    <property type="term" value="P:double-strand break repair via homologous recombination"/>
    <property type="evidence" value="ECO:0007669"/>
    <property type="project" value="UniProtKB-UniRule"/>
</dbReference>
<dbReference type="FunFam" id="3.40.50.300:FF:002956">
    <property type="entry name" value="ATP-dependent helicase/deoxyribonuclease subunit B"/>
    <property type="match status" value="1"/>
</dbReference>
<dbReference type="FunFam" id="3.40.50.300:FF:002959">
    <property type="entry name" value="ATP-dependent helicase/deoxyribonuclease subunit B"/>
    <property type="match status" value="1"/>
</dbReference>
<dbReference type="FunFam" id="3.40.50.300:FF:003174">
    <property type="entry name" value="ATP-dependent helicase/deoxyribonuclease subunit B"/>
    <property type="match status" value="1"/>
</dbReference>
<dbReference type="Gene3D" id="3.90.320.10">
    <property type="match status" value="1"/>
</dbReference>
<dbReference type="Gene3D" id="6.10.140.1030">
    <property type="match status" value="1"/>
</dbReference>
<dbReference type="Gene3D" id="3.40.50.300">
    <property type="entry name" value="P-loop containing nucleotide triphosphate hydrolases"/>
    <property type="match status" value="3"/>
</dbReference>
<dbReference type="HAMAP" id="MF_01452">
    <property type="entry name" value="AddB_type1"/>
    <property type="match status" value="1"/>
</dbReference>
<dbReference type="InterPro" id="IPR049035">
    <property type="entry name" value="ADDB_N"/>
</dbReference>
<dbReference type="InterPro" id="IPR014140">
    <property type="entry name" value="DNA_helicase_suAddB"/>
</dbReference>
<dbReference type="InterPro" id="IPR027417">
    <property type="entry name" value="P-loop_NTPase"/>
</dbReference>
<dbReference type="InterPro" id="IPR011604">
    <property type="entry name" value="PDDEXK-like_dom_sf"/>
</dbReference>
<dbReference type="InterPro" id="IPR038726">
    <property type="entry name" value="PDDEXK_AddAB-type"/>
</dbReference>
<dbReference type="NCBIfam" id="TIGR02773">
    <property type="entry name" value="addB_Gpos"/>
    <property type="match status" value="1"/>
</dbReference>
<dbReference type="PANTHER" id="PTHR30591">
    <property type="entry name" value="RECBCD ENZYME SUBUNIT RECC"/>
    <property type="match status" value="1"/>
</dbReference>
<dbReference type="PANTHER" id="PTHR30591:SF1">
    <property type="entry name" value="RECBCD ENZYME SUBUNIT RECC"/>
    <property type="match status" value="1"/>
</dbReference>
<dbReference type="Pfam" id="PF21445">
    <property type="entry name" value="ADDB_N"/>
    <property type="match status" value="1"/>
</dbReference>
<dbReference type="Pfam" id="PF12705">
    <property type="entry name" value="PDDEXK_1"/>
    <property type="match status" value="1"/>
</dbReference>
<dbReference type="SUPFAM" id="SSF52540">
    <property type="entry name" value="P-loop containing nucleoside triphosphate hydrolases"/>
    <property type="match status" value="1"/>
</dbReference>
<organism>
    <name type="scientific">Clostridium botulinum (strain Okra / Type B1)</name>
    <dbReference type="NCBI Taxonomy" id="498213"/>
    <lineage>
        <taxon>Bacteria</taxon>
        <taxon>Bacillati</taxon>
        <taxon>Bacillota</taxon>
        <taxon>Clostridia</taxon>
        <taxon>Eubacteriales</taxon>
        <taxon>Clostridiaceae</taxon>
        <taxon>Clostridium</taxon>
    </lineage>
</organism>
<evidence type="ECO:0000255" key="1">
    <source>
        <dbReference type="HAMAP-Rule" id="MF_01452"/>
    </source>
</evidence>
<name>ADDB_CLOBK</name>